<evidence type="ECO:0000250" key="1"/>
<evidence type="ECO:0000250" key="2">
    <source>
        <dbReference type="UniProtKB" id="Q68DK7"/>
    </source>
</evidence>
<evidence type="ECO:0000255" key="3">
    <source>
        <dbReference type="PROSITE-ProRule" id="PRU01397"/>
    </source>
</evidence>
<evidence type="ECO:0000256" key="4">
    <source>
        <dbReference type="SAM" id="MobiDB-lite"/>
    </source>
</evidence>
<evidence type="ECO:0000269" key="5">
    <source>
    </source>
</evidence>
<evidence type="ECO:0000269" key="6">
    <source>
    </source>
</evidence>
<evidence type="ECO:0000269" key="7">
    <source>
    </source>
</evidence>
<evidence type="ECO:0000269" key="8">
    <source>
    </source>
</evidence>
<evidence type="ECO:0000269" key="9">
    <source>
    </source>
</evidence>
<evidence type="ECO:0000269" key="10">
    <source>
    </source>
</evidence>
<evidence type="ECO:0000269" key="11">
    <source>
    </source>
</evidence>
<evidence type="ECO:0000269" key="12">
    <source>
    </source>
</evidence>
<evidence type="ECO:0000303" key="13">
    <source>
    </source>
</evidence>
<evidence type="ECO:0000303" key="14">
    <source>
    </source>
</evidence>
<evidence type="ECO:0000303" key="15">
    <source>
    </source>
</evidence>
<evidence type="ECO:0000303" key="16">
    <source>
    </source>
</evidence>
<evidence type="ECO:0000305" key="17"/>
<evidence type="ECO:0000305" key="18">
    <source>
    </source>
</evidence>
<evidence type="ECO:0000312" key="19">
    <source>
        <dbReference type="MGI" id="MGI:1921276"/>
    </source>
</evidence>
<evidence type="ECO:0007829" key="20">
    <source>
        <dbReference type="PDB" id="2Y0M"/>
    </source>
</evidence>
<sequence>MTMRSAVFKAAAAPAGGNPEQRLDYERAAALGGPEDESGAAEAHFLPRHRKLKEPGPPLASSQGGSPSPSPAGCGGGKGRGLLLPAGAAPGQQEESWGGSVPLPCPPPATKQAGIGGEPVAAGAGCSPRPKYQAVLPIQTGSIVVAAAKEPTPWAGDKGGAAPPAATASDPAGPPPLPLPGPPPLAPTATAGTLAASEGRWKSIRKSPLGGGGGSGASSQAACLKQILLLQLDLIEQQQQQLQAKEKEIEELKSERDTLLARIERMERRMQLVKRDNEKERHKLLQGYEPEEREEAELSEKIKLERQPELCETSQALPSKPFSCGRSGKGHKRKTPFGNTERKTPVKKLAPEFSKVKTKTPKHSPIKEEPCGSISETVCKRELRSQETPEKPRSSVDTPPRLSTPQKGPSTHPKEKAFSSEMEDLPYLSTTEMYLCRWHQPPPSPLPLRESSPKKEETVARCLMPSSVAGETSVLAVPSWRDHSVEPLRDPNPSDILENLDDSVFSKRHAKLELDEKRRKRWDIQRIREQRILQRLQLRMYKKKGIQESEPEVTSFFPEPDDVESLLITPFLPVVAFGRPLPKLAPQNFELPWLDERSRCRLEIQKKHTPHRTCRK</sequence>
<comment type="function">
    <text evidence="2 8 9 10 12">Non-catalytic component of the MSL histone acetyltransferase complex, a multiprotein complex that mediates the majority of histone H4 acetylation at 'Lys-16' (H4K16ac), an epigenetic mark that prevents chromatin compaction (PubMed:21217699, PubMed:23523075, PubMed:24842875, PubMed:24913909). The MSL complex is required for chromosome stability and genome integrity by maintaining homeostatic levels of H4K16ac (By similarity). The MSL complex is also involved in gene dosage by promoting up-regulation of genes expressed by the X chromosome (PubMed:23523075). X up-regulation is required to compensate for autosomal biallelic expression (PubMed:23523075). The MSL complex also participates in gene dosage compensation by promoting expression of Tsix non-coding RNA (PubMed:24842875). Within the MSL complex, acts as a scaffold to tether MSL3 and KAT8 together for enzymatic activity regulation (PubMed:21217699). Greatly enhances MSL2 E3 ubiquitin ligase activity, promoting monoubiquitination of histone H2B at 'Lys-34' (H2BK34Ub) (By similarity). This modification in turn stimulates histone H3 methylation at 'Lys-4' (H3K4me) and 'Lys-79' (H3K79me) and leads to gene activation, including that of HOXA9 and MEIS1 (By similarity).</text>
</comment>
<comment type="subunit">
    <text evidence="3 6 8 10 11">Component of a multisubunit histone acetyltransferase complex (MSL) at least composed of the KAT8/MOF/MYST1, MSL1/hampin, MSL2 and MSL3 (PubMed:21217699, PubMed:24842875, PubMed:24898753). Interacts (via PEHE domain) with KAT8 (via HAT domain) and MSL3 (via MRG domain); both interactions are direct (PubMed:17335777, PubMed:21217699). Directly interacts with MSL2 via its coiled coil domain (By similarity). Directly interacts with NUPR1 (By similarity). Interacts with TP53BP1; this interaction may be required for MSL1 DNA repair activity, but not for histone acetyltransferase activity (By similarity). Forms a MSL heterotetrameric core with MSL2 (By similarity). Isoform 1 and isoform 3 interact with TTC4 (PubMed:17335777). Isoform 1 interacts with ECM2 and PIHD1 (PubMed:17335777).</text>
</comment>
<comment type="subcellular location">
    <subcellularLocation>
        <location evidence="6 12">Nucleus</location>
    </subcellularLocation>
</comment>
<comment type="subcellular location">
    <molecule>Isoform 1</molecule>
    <subcellularLocation>
        <location evidence="12">Nucleus</location>
    </subcellularLocation>
    <subcellularLocation>
        <location evidence="12">Nucleus speckle</location>
    </subcellularLocation>
</comment>
<comment type="subcellular location">
    <molecule>Isoform 2</molecule>
    <subcellularLocation>
        <location evidence="7 12">Nucleus</location>
    </subcellularLocation>
    <subcellularLocation>
        <location evidence="12">Nucleus speckle</location>
    </subcellularLocation>
</comment>
<comment type="subcellular location">
    <molecule>Isoform 3</molecule>
    <subcellularLocation>
        <location evidence="5">Nucleus</location>
    </subcellularLocation>
    <subcellularLocation>
        <location evidence="12">Nucleus</location>
        <location evidence="12">Nucleoplasm</location>
    </subcellularLocation>
</comment>
<comment type="subcellular location">
    <molecule>Isoform 4</molecule>
    <subcellularLocation>
        <location evidence="12">Nucleus</location>
        <location evidence="12">Nucleoplasm</location>
    </subcellularLocation>
</comment>
<comment type="subcellular location">
    <molecule>Isoform 5</molecule>
    <subcellularLocation>
        <location evidence="12">Nucleus</location>
        <location evidence="12">Nucleoplasm</location>
    </subcellularLocation>
</comment>
<comment type="alternative products">
    <event type="alternative splicing"/>
    <isoform>
        <id>Q6PDM1-1</id>
        <name>1</name>
        <name evidence="14">Hampin A</name>
        <sequence type="displayed"/>
    </isoform>
    <isoform>
        <id>Q6PDM1-2</id>
        <name>2</name>
        <name evidence="14">Hampin B</name>
        <sequence type="described" ref="VSP_035241"/>
    </isoform>
    <isoform>
        <id>Q6PDM1-3</id>
        <name>3</name>
        <name evidence="14">Hampin C</name>
        <sequence type="described" ref="VSP_035239 VSP_035240 VSP_035241"/>
    </isoform>
    <isoform>
        <id>Q6PDM1-4</id>
        <name>4</name>
        <name evidence="14">Hampin D</name>
        <sequence type="described" ref="VSP_035242 VSP_035243"/>
    </isoform>
    <isoform>
        <id>Q6PDM1-5</id>
        <name>5</name>
        <name evidence="14">Hampin E</name>
        <sequence type="described" ref="VSP_035239 VSP_035240 VSP_035242 VSP_035243"/>
    </isoform>
    <isoform>
        <id>Q6PDM1-6</id>
        <name>6</name>
        <sequence type="described" ref="VSP_035238 VSP_035242 VSP_035243"/>
    </isoform>
</comment>
<comment type="tissue specificity">
    <text evidence="5">Isoform 3 and isoform 5 are testis-specific (PubMed:16119455). Isoform 1 and isoform 4 are ubiquitously expressed (PubMed:16119455). Isoform 2 is expressed at low levels in the testis and brain (PubMed:16119455).</text>
</comment>
<comment type="domain">
    <text evidence="2">The coiled coil is formed by helices from two subunits in the MSL1 homodimer.</text>
</comment>
<comment type="PTM">
    <text evidence="2">Sumoylated with SUMO1.</text>
</comment>
<comment type="similarity">
    <text evidence="17">Belongs to the msl-1 family.</text>
</comment>
<comment type="sequence caution" evidence="17">
    <conflict type="frameshift">
        <sequence resource="EMBL-CDS" id="BAC35489"/>
    </conflict>
</comment>
<keyword id="KW-0002">3D-structure</keyword>
<keyword id="KW-0007">Acetylation</keyword>
<keyword id="KW-0025">Alternative splicing</keyword>
<keyword id="KW-0156">Chromatin regulator</keyword>
<keyword id="KW-0175">Coiled coil</keyword>
<keyword id="KW-1017">Isopeptide bond</keyword>
<keyword id="KW-0539">Nucleus</keyword>
<keyword id="KW-0597">Phosphoprotein</keyword>
<keyword id="KW-1185">Reference proteome</keyword>
<keyword id="KW-0832">Ubl conjugation</keyword>
<gene>
    <name evidence="16 19" type="primary">Msl1</name>
    <name type="synonym">Msl1l1</name>
</gene>
<organism>
    <name type="scientific">Mus musculus</name>
    <name type="common">Mouse</name>
    <dbReference type="NCBI Taxonomy" id="10090"/>
    <lineage>
        <taxon>Eukaryota</taxon>
        <taxon>Metazoa</taxon>
        <taxon>Chordata</taxon>
        <taxon>Craniata</taxon>
        <taxon>Vertebrata</taxon>
        <taxon>Euteleostomi</taxon>
        <taxon>Mammalia</taxon>
        <taxon>Eutheria</taxon>
        <taxon>Euarchontoglires</taxon>
        <taxon>Glires</taxon>
        <taxon>Rodentia</taxon>
        <taxon>Myomorpha</taxon>
        <taxon>Muroidea</taxon>
        <taxon>Muridae</taxon>
        <taxon>Murinae</taxon>
        <taxon>Mus</taxon>
        <taxon>Mus</taxon>
    </lineage>
</organism>
<reference key="1">
    <citation type="journal article" date="2005" name="Bioorg. Khim.">
        <title>Tissue specificity of alternative splicing products of mouse mRNA encoding new protein hampin homologous to the Drosophila MSL-1 protein.</title>
        <authorList>
            <person name="Dmitriev R.I."/>
            <person name="Pestov N.B."/>
            <person name="Korneenko T.V."/>
            <person name="Gerasimova A.V."/>
            <person name="Zhao K.H."/>
            <person name="Modianov N.N."/>
            <person name="Kostina M.B."/>
            <person name="Shakhparonov M.I."/>
        </authorList>
    </citation>
    <scope>NUCLEOTIDE SEQUENCE [MRNA] (ISOFORM 5)</scope>
    <scope>SUBCELLULAR LOCATION</scope>
    <scope>TISSUE SPECIFICITY</scope>
    <scope>ALTERNATIVE SPLICING</scope>
    <source>
        <strain>BALB/cJ</strain>
        <tissue>Testis</tissue>
    </source>
</reference>
<reference key="2">
    <citation type="journal article" date="2005" name="Science">
        <title>The transcriptional landscape of the mammalian genome.</title>
        <authorList>
            <person name="Carninci P."/>
            <person name="Kasukawa T."/>
            <person name="Katayama S."/>
            <person name="Gough J."/>
            <person name="Frith M.C."/>
            <person name="Maeda N."/>
            <person name="Oyama R."/>
            <person name="Ravasi T."/>
            <person name="Lenhard B."/>
            <person name="Wells C."/>
            <person name="Kodzius R."/>
            <person name="Shimokawa K."/>
            <person name="Bajic V.B."/>
            <person name="Brenner S.E."/>
            <person name="Batalov S."/>
            <person name="Forrest A.R."/>
            <person name="Zavolan M."/>
            <person name="Davis M.J."/>
            <person name="Wilming L.G."/>
            <person name="Aidinis V."/>
            <person name="Allen J.E."/>
            <person name="Ambesi-Impiombato A."/>
            <person name="Apweiler R."/>
            <person name="Aturaliya R.N."/>
            <person name="Bailey T.L."/>
            <person name="Bansal M."/>
            <person name="Baxter L."/>
            <person name="Beisel K.W."/>
            <person name="Bersano T."/>
            <person name="Bono H."/>
            <person name="Chalk A.M."/>
            <person name="Chiu K.P."/>
            <person name="Choudhary V."/>
            <person name="Christoffels A."/>
            <person name="Clutterbuck D.R."/>
            <person name="Crowe M.L."/>
            <person name="Dalla E."/>
            <person name="Dalrymple B.P."/>
            <person name="de Bono B."/>
            <person name="Della Gatta G."/>
            <person name="di Bernardo D."/>
            <person name="Down T."/>
            <person name="Engstrom P."/>
            <person name="Fagiolini M."/>
            <person name="Faulkner G."/>
            <person name="Fletcher C.F."/>
            <person name="Fukushima T."/>
            <person name="Furuno M."/>
            <person name="Futaki S."/>
            <person name="Gariboldi M."/>
            <person name="Georgii-Hemming P."/>
            <person name="Gingeras T.R."/>
            <person name="Gojobori T."/>
            <person name="Green R.E."/>
            <person name="Gustincich S."/>
            <person name="Harbers M."/>
            <person name="Hayashi Y."/>
            <person name="Hensch T.K."/>
            <person name="Hirokawa N."/>
            <person name="Hill D."/>
            <person name="Huminiecki L."/>
            <person name="Iacono M."/>
            <person name="Ikeo K."/>
            <person name="Iwama A."/>
            <person name="Ishikawa T."/>
            <person name="Jakt M."/>
            <person name="Kanapin A."/>
            <person name="Katoh M."/>
            <person name="Kawasawa Y."/>
            <person name="Kelso J."/>
            <person name="Kitamura H."/>
            <person name="Kitano H."/>
            <person name="Kollias G."/>
            <person name="Krishnan S.P."/>
            <person name="Kruger A."/>
            <person name="Kummerfeld S.K."/>
            <person name="Kurochkin I.V."/>
            <person name="Lareau L.F."/>
            <person name="Lazarevic D."/>
            <person name="Lipovich L."/>
            <person name="Liu J."/>
            <person name="Liuni S."/>
            <person name="McWilliam S."/>
            <person name="Madan Babu M."/>
            <person name="Madera M."/>
            <person name="Marchionni L."/>
            <person name="Matsuda H."/>
            <person name="Matsuzawa S."/>
            <person name="Miki H."/>
            <person name="Mignone F."/>
            <person name="Miyake S."/>
            <person name="Morris K."/>
            <person name="Mottagui-Tabar S."/>
            <person name="Mulder N."/>
            <person name="Nakano N."/>
            <person name="Nakauchi H."/>
            <person name="Ng P."/>
            <person name="Nilsson R."/>
            <person name="Nishiguchi S."/>
            <person name="Nishikawa S."/>
            <person name="Nori F."/>
            <person name="Ohara O."/>
            <person name="Okazaki Y."/>
            <person name="Orlando V."/>
            <person name="Pang K.C."/>
            <person name="Pavan W.J."/>
            <person name="Pavesi G."/>
            <person name="Pesole G."/>
            <person name="Petrovsky N."/>
            <person name="Piazza S."/>
            <person name="Reed J."/>
            <person name="Reid J.F."/>
            <person name="Ring B.Z."/>
            <person name="Ringwald M."/>
            <person name="Rost B."/>
            <person name="Ruan Y."/>
            <person name="Salzberg S.L."/>
            <person name="Sandelin A."/>
            <person name="Schneider C."/>
            <person name="Schoenbach C."/>
            <person name="Sekiguchi K."/>
            <person name="Semple C.A."/>
            <person name="Seno S."/>
            <person name="Sessa L."/>
            <person name="Sheng Y."/>
            <person name="Shibata Y."/>
            <person name="Shimada H."/>
            <person name="Shimada K."/>
            <person name="Silva D."/>
            <person name="Sinclair B."/>
            <person name="Sperling S."/>
            <person name="Stupka E."/>
            <person name="Sugiura K."/>
            <person name="Sultana R."/>
            <person name="Takenaka Y."/>
            <person name="Taki K."/>
            <person name="Tammoja K."/>
            <person name="Tan S.L."/>
            <person name="Tang S."/>
            <person name="Taylor M.S."/>
            <person name="Tegner J."/>
            <person name="Teichmann S.A."/>
            <person name="Ueda H.R."/>
            <person name="van Nimwegen E."/>
            <person name="Verardo R."/>
            <person name="Wei C.L."/>
            <person name="Yagi K."/>
            <person name="Yamanishi H."/>
            <person name="Zabarovsky E."/>
            <person name="Zhu S."/>
            <person name="Zimmer A."/>
            <person name="Hide W."/>
            <person name="Bult C."/>
            <person name="Grimmond S.M."/>
            <person name="Teasdale R.D."/>
            <person name="Liu E.T."/>
            <person name="Brusic V."/>
            <person name="Quackenbush J."/>
            <person name="Wahlestedt C."/>
            <person name="Mattick J.S."/>
            <person name="Hume D.A."/>
            <person name="Kai C."/>
            <person name="Sasaki D."/>
            <person name="Tomaru Y."/>
            <person name="Fukuda S."/>
            <person name="Kanamori-Katayama M."/>
            <person name="Suzuki M."/>
            <person name="Aoki J."/>
            <person name="Arakawa T."/>
            <person name="Iida J."/>
            <person name="Imamura K."/>
            <person name="Itoh M."/>
            <person name="Kato T."/>
            <person name="Kawaji H."/>
            <person name="Kawagashira N."/>
            <person name="Kawashima T."/>
            <person name="Kojima M."/>
            <person name="Kondo S."/>
            <person name="Konno H."/>
            <person name="Nakano K."/>
            <person name="Ninomiya N."/>
            <person name="Nishio T."/>
            <person name="Okada M."/>
            <person name="Plessy C."/>
            <person name="Shibata K."/>
            <person name="Shiraki T."/>
            <person name="Suzuki S."/>
            <person name="Tagami M."/>
            <person name="Waki K."/>
            <person name="Watahiki A."/>
            <person name="Okamura-Oho Y."/>
            <person name="Suzuki H."/>
            <person name="Kawai J."/>
            <person name="Hayashizaki Y."/>
        </authorList>
    </citation>
    <scope>NUCLEOTIDE SEQUENCE [LARGE SCALE MRNA] (ISOFORMS 1; 2; 3 AND 6)</scope>
    <source>
        <strain>C57BL/6J</strain>
        <tissue>Eye</tissue>
        <tissue>Head</tissue>
        <tissue>Testis</tissue>
    </source>
</reference>
<reference key="3">
    <citation type="journal article" date="2009" name="PLoS Biol.">
        <title>Lineage-specific biology revealed by a finished genome assembly of the mouse.</title>
        <authorList>
            <person name="Church D.M."/>
            <person name="Goodstadt L."/>
            <person name="Hillier L.W."/>
            <person name="Zody M.C."/>
            <person name="Goldstein S."/>
            <person name="She X."/>
            <person name="Bult C.J."/>
            <person name="Agarwala R."/>
            <person name="Cherry J.L."/>
            <person name="DiCuccio M."/>
            <person name="Hlavina W."/>
            <person name="Kapustin Y."/>
            <person name="Meric P."/>
            <person name="Maglott D."/>
            <person name="Birtle Z."/>
            <person name="Marques A.C."/>
            <person name="Graves T."/>
            <person name="Zhou S."/>
            <person name="Teague B."/>
            <person name="Potamousis K."/>
            <person name="Churas C."/>
            <person name="Place M."/>
            <person name="Herschleb J."/>
            <person name="Runnheim R."/>
            <person name="Forrest D."/>
            <person name="Amos-Landgraf J."/>
            <person name="Schwartz D.C."/>
            <person name="Cheng Z."/>
            <person name="Lindblad-Toh K."/>
            <person name="Eichler E.E."/>
            <person name="Ponting C.P."/>
        </authorList>
    </citation>
    <scope>NUCLEOTIDE SEQUENCE [LARGE SCALE GENOMIC DNA]</scope>
    <source>
        <strain>C57BL/6J</strain>
    </source>
</reference>
<reference key="4">
    <citation type="journal article" date="2004" name="Genome Res.">
        <title>The status, quality, and expansion of the NIH full-length cDNA project: the Mammalian Gene Collection (MGC).</title>
        <authorList>
            <consortium name="The MGC Project Team"/>
        </authorList>
    </citation>
    <scope>NUCLEOTIDE SEQUENCE [LARGE SCALE MRNA] (ISOFORMS 1 AND 4)</scope>
    <source>
        <strain>C57BL/6J</strain>
        <tissue>Brain</tissue>
    </source>
</reference>
<reference key="5">
    <citation type="journal article" date="2007" name="Biochem. Biophys. Res. Commun.">
        <title>Characterization of hampin/MSL1 as a node in the nuclear interactome.</title>
        <authorList>
            <person name="Dmitriev R.I."/>
            <person name="Korneenko T.V."/>
            <person name="Bessonov A.A."/>
            <person name="Shakhparonov M.I."/>
            <person name="Modyanov N.N."/>
            <person name="Pestov N.B."/>
        </authorList>
    </citation>
    <scope>INTERACTION WITH TTC4; PIH1D1; KAT8 AND ECM2</scope>
    <scope>SUBCELLULAR LOCATION</scope>
</reference>
<reference key="6">
    <citation type="journal article" date="2009" name="Cell Tissue Res.">
        <title>Nuclear transport of protein TTC4 depends on the cell cycle.</title>
        <authorList>
            <person name="Dmitriev R.I."/>
            <person name="Okkelman I.A."/>
            <person name="Abdulin R.A."/>
            <person name="Shakhparonov M.I."/>
            <person name="Pestov N.B."/>
        </authorList>
    </citation>
    <scope>SUBCELLULAR LOCATION</scope>
</reference>
<reference key="7">
    <citation type="journal article" date="2010" name="Cell">
        <title>A tissue-specific atlas of mouse protein phosphorylation and expression.</title>
        <authorList>
            <person name="Huttlin E.L."/>
            <person name="Jedrychowski M.P."/>
            <person name="Elias J.E."/>
            <person name="Goswami T."/>
            <person name="Rad R."/>
            <person name="Beausoleil S.A."/>
            <person name="Villen J."/>
            <person name="Haas W."/>
            <person name="Sowa M.E."/>
            <person name="Gygi S.P."/>
        </authorList>
    </citation>
    <scope>PHOSPHORYLATION [LARGE SCALE ANALYSIS] AT SER-207</scope>
    <scope>IDENTIFICATION BY MASS SPECTROMETRY [LARGE SCALE ANALYSIS]</scope>
    <source>
        <tissue>Kidney</tissue>
        <tissue>Lung</tissue>
    </source>
</reference>
<reference key="8">
    <citation type="journal article" date="2014" name="Elife">
        <title>Mof-associated complexes have overlapping and unique roles in regulating pluripotency in embryonic stem cells and during differentiation.</title>
        <authorList>
            <person name="Ravens S."/>
            <person name="Fournier M."/>
            <person name="Ye T."/>
            <person name="Stierle M."/>
            <person name="Dembele D."/>
            <person name="Chavant V."/>
            <person name="Tora L."/>
        </authorList>
    </citation>
    <scope>IDENTIFICATION IN MSL COMPLEX</scope>
</reference>
<reference key="9">
    <citation type="journal article" date="2014" name="J. Cell. Biochem.">
        <title>Two distinct nuclear localization signals in mammalian MSL1 regulate its function.</title>
        <authorList>
            <person name="Dmitriev R.I."/>
            <person name="Pestov N.B."/>
            <person name="Shakhparonov M.I."/>
            <person name="Okkelman I.A."/>
        </authorList>
    </citation>
    <scope>FUNCTION</scope>
    <scope>SUBCELLULAR LOCATION</scope>
    <scope>NUCLEAR LOCALIZATION SIGNAL</scope>
    <scope>BIPARTITE NUCLEAR LOCALIZATION SIGNAL</scope>
</reference>
<reference key="10">
    <citation type="journal article" date="2016" name="Nat. Struct. Mol. Biol.">
        <title>Functional interplay between MSL1 and CDK7 controls RNA polymerase II Ser5 phosphorylation.</title>
        <authorList>
            <person name="Chlamydas S."/>
            <person name="Holz H."/>
            <person name="Samata M."/>
            <person name="Chelmicki T."/>
            <person name="Georgiev P."/>
            <person name="Pelechano V."/>
            <person name="Duendar F."/>
            <person name="Dasmeh P."/>
            <person name="Mittler G."/>
            <person name="Cadete F.T."/>
            <person name="Ramirez F."/>
            <person name="Conrad T."/>
            <person name="Wei W."/>
            <person name="Raja S."/>
            <person name="Manke T."/>
            <person name="Luscombe N.M."/>
            <person name="Steinmetz L.M."/>
            <person name="Akhtar A."/>
        </authorList>
    </citation>
    <scope>PHOSPHORYLATION AT SER-66; SER-127; SER-207; THR-358; THR-360; SER-364; SER-385; THR-388; THR-398; THR-404; SER-444; SER-452 AND SER-484</scope>
</reference>
<reference key="11">
    <citation type="journal article" date="2013" name="Dev. Cell">
        <title>Mammalian X upregulation is associated with enhanced transcription initiation, RNA half-life, and MOF-mediated H4K16 acetylation.</title>
        <authorList>
            <person name="Deng X."/>
            <person name="Berletch J.B."/>
            <person name="Ma W."/>
            <person name="Nguyen D.K."/>
            <person name="Hiatt J.B."/>
            <person name="Noble W.S."/>
            <person name="Shendure J."/>
            <person name="Disteche C.M."/>
        </authorList>
    </citation>
    <scope>FUNCTION</scope>
</reference>
<reference key="12">
    <citation type="journal article" date="2014" name="Elife">
        <title>MOF-associated complexes ensure stem cell identity and Xist repression.</title>
        <authorList>
            <person name="Chelmicki T."/>
            <person name="Duendar F."/>
            <person name="Turley M.J."/>
            <person name="Khanam T."/>
            <person name="Aktas T."/>
            <person name="Ramirez F."/>
            <person name="Gendrel A.V."/>
            <person name="Wright P.R."/>
            <person name="Videm P."/>
            <person name="Backofen R."/>
            <person name="Heard E."/>
            <person name="Manke T."/>
            <person name="Akhtar A."/>
        </authorList>
    </citation>
    <scope>FUNCTION</scope>
    <scope>IDENTIFICATION IN THE MSL COMPLEX</scope>
</reference>
<reference key="13">
    <citation type="journal article" date="2011" name="Nat. Struct. Mol. Biol.">
        <title>Structural basis for MOF and MSL3 recruitment into the dosage compensation complex by MSL1.</title>
        <authorList>
            <person name="Kadlec J."/>
            <person name="Hallacli E."/>
            <person name="Lipp M."/>
            <person name="Holz H."/>
            <person name="Sanchez-Weatherby J."/>
            <person name="Cusack S."/>
            <person name="Akhtar A."/>
        </authorList>
    </citation>
    <scope>X-RAY CRYSTALLOGRAPHY (2.70 ANGSTROMS) OF 470-540 IN COMPLEXES WITH KAT8 AND MSL3</scope>
    <scope>FUNCTION</scope>
    <scope>INTERACTION WITH KAT8 AND MSL3</scope>
    <scope>MUTAGENESIS OF GLU-498; PHE-505; HIS-509; PHE-556; ALA-576; PHE-577 AND PHE-589</scope>
</reference>
<name>MSL1_MOUSE</name>
<feature type="chain" id="PRO_0000349237" description="Male-specific lethal 1 homolog">
    <location>
        <begin position="1"/>
        <end position="616"/>
    </location>
</feature>
<feature type="domain" description="PEHE" evidence="3">
    <location>
        <begin position="474"/>
        <end position="593"/>
    </location>
</feature>
<feature type="region of interest" description="Disordered" evidence="4">
    <location>
        <begin position="1"/>
        <end position="116"/>
    </location>
</feature>
<feature type="region of interest" description="Disordered" evidence="4">
    <location>
        <begin position="152"/>
        <end position="218"/>
    </location>
</feature>
<feature type="region of interest" description="Interaction with MSL2" evidence="1">
    <location>
        <begin position="225"/>
        <end position="239"/>
    </location>
</feature>
<feature type="region of interest" description="Disordered" evidence="4">
    <location>
        <begin position="306"/>
        <end position="422"/>
    </location>
</feature>
<feature type="region of interest" description="Interaction with KAT8 HAT domain" evidence="3">
    <location>
        <begin position="498"/>
        <end position="516"/>
    </location>
</feature>
<feature type="region of interest" description="Interaction with MSL3 MRG domain">
    <location>
        <begin position="552"/>
        <end position="593"/>
    </location>
</feature>
<feature type="coiled-coil region" evidence="1">
    <location>
        <begin position="215"/>
        <end position="284"/>
    </location>
</feature>
<feature type="short sequence motif" description="Nuclear localization signal" evidence="12">
    <location>
        <begin position="319"/>
        <end position="348"/>
    </location>
</feature>
<feature type="short sequence motif" description="Bipartite nuclear localization signal" evidence="12">
    <location>
        <begin position="507"/>
        <end position="521"/>
    </location>
</feature>
<feature type="compositionally biased region" description="Low complexity" evidence="4">
    <location>
        <begin position="81"/>
        <end position="91"/>
    </location>
</feature>
<feature type="compositionally biased region" description="Low complexity" evidence="4">
    <location>
        <begin position="153"/>
        <end position="171"/>
    </location>
</feature>
<feature type="compositionally biased region" description="Pro residues" evidence="4">
    <location>
        <begin position="172"/>
        <end position="186"/>
    </location>
</feature>
<feature type="compositionally biased region" description="Low complexity" evidence="4">
    <location>
        <begin position="187"/>
        <end position="196"/>
    </location>
</feature>
<feature type="compositionally biased region" description="Basic and acidic residues" evidence="4">
    <location>
        <begin position="378"/>
        <end position="394"/>
    </location>
</feature>
<feature type="compositionally biased region" description="Polar residues" evidence="4">
    <location>
        <begin position="395"/>
        <end position="409"/>
    </location>
</feature>
<feature type="modified residue" description="Phosphoserine" evidence="18">
    <location>
        <position position="66"/>
    </location>
</feature>
<feature type="modified residue" description="Phosphoserine" evidence="18">
    <location>
        <position position="127"/>
    </location>
</feature>
<feature type="modified residue" description="Phosphoserine" evidence="18">
    <location>
        <position position="207"/>
    </location>
</feature>
<feature type="modified residue" description="N6-acetyllysine" evidence="2">
    <location>
        <position position="355"/>
    </location>
</feature>
<feature type="modified residue" description="Phosphothreonine" evidence="18">
    <location>
        <position position="358"/>
    </location>
</feature>
<feature type="modified residue" description="Phosphothreonine" evidence="18">
    <location>
        <position position="360"/>
    </location>
</feature>
<feature type="modified residue" description="Phosphoserine" evidence="18">
    <location>
        <position position="364"/>
    </location>
</feature>
<feature type="modified residue" description="Phosphoserine" evidence="18">
    <location>
        <position position="385"/>
    </location>
</feature>
<feature type="modified residue" description="Phosphothreonine" evidence="18">
    <location>
        <position position="388"/>
    </location>
</feature>
<feature type="modified residue" description="Phosphoserine" evidence="2">
    <location>
        <position position="395"/>
    </location>
</feature>
<feature type="modified residue" description="Phosphothreonine" evidence="18">
    <location>
        <position position="398"/>
    </location>
</feature>
<feature type="modified residue" description="Phosphothreonine" evidence="18">
    <location>
        <position position="404"/>
    </location>
</feature>
<feature type="modified residue" description="Phosphoserine" evidence="18">
    <location>
        <position position="444"/>
    </location>
</feature>
<feature type="modified residue" description="Phosphoserine" evidence="18">
    <location>
        <position position="452"/>
    </location>
</feature>
<feature type="modified residue" description="Phosphoserine" evidence="18">
    <location>
        <position position="484"/>
    </location>
</feature>
<feature type="cross-link" description="Glycyl lysine isopeptide (Lys-Gly) (interchain with G-Cter in SUMO2)" evidence="2">
    <location>
        <position position="303"/>
    </location>
</feature>
<feature type="cross-link" description="Glycyl lysine isopeptide (Lys-Gly) (interchain with G-Cter in SUMO2)" evidence="2">
    <location>
        <position position="367"/>
    </location>
</feature>
<feature type="cross-link" description="Glycyl lysine isopeptide (Lys-Gly) (interchain with G-Cter in SUMO2)" evidence="2">
    <location>
        <position position="380"/>
    </location>
</feature>
<feature type="splice variant" id="VSP_035238" description="In isoform 6." evidence="15">
    <location>
        <begin position="1"/>
        <end position="265"/>
    </location>
</feature>
<feature type="splice variant" id="VSP_035239" description="In isoform 3 and isoform 5." evidence="14 15">
    <location>
        <begin position="1"/>
        <end position="230"/>
    </location>
</feature>
<feature type="splice variant" id="VSP_035240" description="In isoform 3 and isoform 5." evidence="14 15">
    <original>QLDLIEQQQQQLQAKEKEIEELKSERDT</original>
    <variation>MLRVFARHGQEALIPSLAAQTTTTNRNK</variation>
    <location>
        <begin position="231"/>
        <end position="258"/>
    </location>
</feature>
<feature type="splice variant" id="VSP_035241" description="In isoform 2 and isoform 3." evidence="15">
    <original>RCLMPSSVAGETSVLAV</original>
    <variation>I</variation>
    <location>
        <begin position="461"/>
        <end position="477"/>
    </location>
</feature>
<feature type="splice variant" id="VSP_035242" description="In isoform 4, isoform 5 and isoform 6." evidence="13 14 15">
    <original>RCL</original>
    <variation>SKA</variation>
    <location>
        <begin position="461"/>
        <end position="463"/>
    </location>
</feature>
<feature type="splice variant" id="VSP_035243" description="In isoform 4, isoform 5 and isoform 6." evidence="13 14 15">
    <location>
        <begin position="464"/>
        <end position="616"/>
    </location>
</feature>
<feature type="mutagenesis site" description="Abolishes interaction with KAT8." evidence="8">
    <original>E</original>
    <variation>R</variation>
    <location>
        <position position="498"/>
    </location>
</feature>
<feature type="mutagenesis site" description="Abolishes interaction with KAT8." evidence="8">
    <original>F</original>
    <variation>R</variation>
    <location>
        <position position="505"/>
    </location>
</feature>
<feature type="mutagenesis site" description="Abolishes interaction with KAT8." evidence="8">
    <original>H</original>
    <variation>R</variation>
    <location>
        <position position="509"/>
    </location>
</feature>
<feature type="mutagenesis site" description="Strongly reduces interaction with MSL3; when associated with E-576 and E-589 or E-577 and E-589." evidence="8">
    <original>F</original>
    <variation>E</variation>
    <location>
        <position position="556"/>
    </location>
</feature>
<feature type="mutagenesis site" description="No effect on interaction with MSL3. Reduces interaction; when associated with E-589. Strongly reduces interaction with MSL3; when associated with E-556 and E-589." evidence="8">
    <original>A</original>
    <variation>E</variation>
    <location>
        <position position="576"/>
    </location>
</feature>
<feature type="mutagenesis site" description="No effect on interaction with MSL3. Reduces interaction; when associated with E-589. Strongly reduces interaction with MSL3; when associated with E-556 and E-589." evidence="8">
    <original>F</original>
    <variation>E</variation>
    <location>
        <position position="577"/>
    </location>
</feature>
<feature type="mutagenesis site" description="Strongly reduces interaction with MSL3; when associated with E-556 and E-576 or E-556 and E-577." evidence="8">
    <original>F</original>
    <variation>E</variation>
    <location>
        <position position="589"/>
    </location>
</feature>
<feature type="sequence conflict" description="In Ref. 2; BAB29369." evidence="17" ref="2">
    <original>T</original>
    <variation>N</variation>
    <location>
        <position position="344"/>
    </location>
</feature>
<feature type="sequence conflict" description="In Ref. 2; BAB29868." evidence="17" ref="2">
    <original>TP</original>
    <variation>PQ</variation>
    <location>
        <begin position="388"/>
        <end position="389"/>
    </location>
</feature>
<feature type="helix" evidence="20">
    <location>
        <begin position="502"/>
        <end position="534"/>
    </location>
</feature>
<accession>Q6PDM1</accession>
<accession>A3KFP2</accession>
<accession>A3KFP4</accession>
<accession>Q27QB3</accession>
<accession>Q3TTE5</accession>
<accession>Q80XS0</accession>
<accession>Q8BPN3</accession>
<accession>Q9CXF9</accession>
<accession>Q9D5C9</accession>
<proteinExistence type="evidence at protein level"/>
<protein>
    <recommendedName>
        <fullName evidence="16">Male-specific lethal 1 homolog</fullName>
        <shortName evidence="16">MSL-1</shortName>
    </recommendedName>
    <alternativeName>
        <fullName evidence="14">Hampin</fullName>
    </alternativeName>
    <alternativeName>
        <fullName>Male-specific lethal 1-like 1</fullName>
        <shortName>MSL1-like 1</shortName>
    </alternativeName>
</protein>
<dbReference type="EMBL" id="DQ387855">
    <property type="protein sequence ID" value="ABD46887.1"/>
    <property type="molecule type" value="mRNA"/>
</dbReference>
<dbReference type="EMBL" id="AK014463">
    <property type="protein sequence ID" value="BAB29369.1"/>
    <property type="molecule type" value="mRNA"/>
</dbReference>
<dbReference type="EMBL" id="AK015496">
    <property type="protein sequence ID" value="BAB29868.1"/>
    <property type="molecule type" value="mRNA"/>
</dbReference>
<dbReference type="EMBL" id="AK161412">
    <property type="protein sequence ID" value="BAE36380.1"/>
    <property type="molecule type" value="mRNA"/>
</dbReference>
<dbReference type="EMBL" id="AK053719">
    <property type="protein sequence ID" value="BAC35489.1"/>
    <property type="status" value="ALT_FRAME"/>
    <property type="molecule type" value="mRNA"/>
</dbReference>
<dbReference type="EMBL" id="AL590963">
    <property type="status" value="NOT_ANNOTATED_CDS"/>
    <property type="molecule type" value="Genomic_DNA"/>
</dbReference>
<dbReference type="EMBL" id="BC043039">
    <property type="protein sequence ID" value="AAH43039.1"/>
    <property type="molecule type" value="mRNA"/>
</dbReference>
<dbReference type="EMBL" id="BC055715">
    <property type="protein sequence ID" value="AAH55715.1"/>
    <property type="molecule type" value="mRNA"/>
</dbReference>
<dbReference type="EMBL" id="BC058629">
    <property type="protein sequence ID" value="AAH58629.1"/>
    <property type="molecule type" value="mRNA"/>
</dbReference>
<dbReference type="CCDS" id="CCDS25364.1">
    <molecule id="Q6PDM1-1"/>
</dbReference>
<dbReference type="CCDS" id="CCDS88248.1">
    <molecule id="Q6PDM1-2"/>
</dbReference>
<dbReference type="CCDS" id="CCDS88249.1">
    <molecule id="Q6PDM1-4"/>
</dbReference>
<dbReference type="CCDS" id="CCDS88250.1">
    <molecule id="Q6PDM1-3"/>
</dbReference>
<dbReference type="RefSeq" id="NP_001348860.1">
    <molecule id="Q6PDM1-2"/>
    <property type="nucleotide sequence ID" value="NM_001361931.1"/>
</dbReference>
<dbReference type="RefSeq" id="NP_001348861.1">
    <molecule id="Q6PDM1-4"/>
    <property type="nucleotide sequence ID" value="NM_001361932.1"/>
</dbReference>
<dbReference type="RefSeq" id="NP_001348862.1">
    <molecule id="Q6PDM1-3"/>
    <property type="nucleotide sequence ID" value="NM_001361933.1"/>
</dbReference>
<dbReference type="RefSeq" id="NP_001348863.1">
    <molecule id="Q6PDM1-5"/>
    <property type="nucleotide sequence ID" value="NM_001361934.1"/>
</dbReference>
<dbReference type="RefSeq" id="NP_082998.2">
    <molecule id="Q6PDM1-1"/>
    <property type="nucleotide sequence ID" value="NM_028722.3"/>
</dbReference>
<dbReference type="RefSeq" id="XP_006534414.1">
    <property type="nucleotide sequence ID" value="XM_006534351.2"/>
</dbReference>
<dbReference type="RefSeq" id="XP_011247586.1">
    <property type="nucleotide sequence ID" value="XM_011249284.2"/>
</dbReference>
<dbReference type="PDB" id="2Y0M">
    <property type="method" value="X-ray"/>
    <property type="resolution" value="2.70 A"/>
    <property type="chains" value="B=470-540"/>
</dbReference>
<dbReference type="PDB" id="2Y0N">
    <property type="method" value="X-ray"/>
    <property type="resolution" value="3.00 A"/>
    <property type="chains" value="E/F/G/H=545-597"/>
</dbReference>
<dbReference type="PDBsum" id="2Y0M"/>
<dbReference type="PDBsum" id="2Y0N"/>
<dbReference type="SMR" id="Q6PDM1"/>
<dbReference type="BioGRID" id="216434">
    <property type="interactions" value="6"/>
</dbReference>
<dbReference type="ComplexPortal" id="CPX-859">
    <property type="entry name" value="MSL histone acetyltransferase complex"/>
</dbReference>
<dbReference type="FunCoup" id="Q6PDM1">
    <property type="interactions" value="4593"/>
</dbReference>
<dbReference type="IntAct" id="Q6PDM1">
    <property type="interactions" value="3"/>
</dbReference>
<dbReference type="STRING" id="10090.ENSMUSP00000042792"/>
<dbReference type="GlyGen" id="Q6PDM1">
    <property type="glycosylation" value="1 site, 1 O-linked glycan (1 site)"/>
</dbReference>
<dbReference type="iPTMnet" id="Q6PDM1"/>
<dbReference type="PhosphoSitePlus" id="Q6PDM1"/>
<dbReference type="jPOST" id="Q6PDM1"/>
<dbReference type="PaxDb" id="10090-ENSMUSP00000042792"/>
<dbReference type="PeptideAtlas" id="Q6PDM1"/>
<dbReference type="ProteomicsDB" id="291515">
    <molecule id="Q6PDM1-1"/>
</dbReference>
<dbReference type="ProteomicsDB" id="291516">
    <molecule id="Q6PDM1-2"/>
</dbReference>
<dbReference type="ProteomicsDB" id="291517">
    <molecule id="Q6PDM1-3"/>
</dbReference>
<dbReference type="ProteomicsDB" id="291518">
    <molecule id="Q6PDM1-4"/>
</dbReference>
<dbReference type="ProteomicsDB" id="291519">
    <molecule id="Q6PDM1-5"/>
</dbReference>
<dbReference type="ProteomicsDB" id="291520">
    <molecule id="Q6PDM1-6"/>
</dbReference>
<dbReference type="Pumba" id="Q6PDM1"/>
<dbReference type="Antibodypedia" id="7890">
    <property type="antibodies" value="88 antibodies from 21 providers"/>
</dbReference>
<dbReference type="Ensembl" id="ENSMUST00000037915.9">
    <molecule id="Q6PDM1-1"/>
    <property type="protein sequence ID" value="ENSMUSP00000042792.3"/>
    <property type="gene ID" value="ENSMUSG00000052915.15"/>
</dbReference>
<dbReference type="Ensembl" id="ENSMUST00000037930.13">
    <molecule id="Q6PDM1-3"/>
    <property type="protein sequence ID" value="ENSMUSP00000043328.7"/>
    <property type="gene ID" value="ENSMUSG00000052915.15"/>
</dbReference>
<dbReference type="Ensembl" id="ENSMUST00000107485.8">
    <molecule id="Q6PDM1-4"/>
    <property type="protein sequence ID" value="ENSMUSP00000103109.2"/>
    <property type="gene ID" value="ENSMUSG00000052915.15"/>
</dbReference>
<dbReference type="Ensembl" id="ENSMUST00000107487.10">
    <molecule id="Q6PDM1-2"/>
    <property type="protein sequence ID" value="ENSMUSP00000103111.4"/>
    <property type="gene ID" value="ENSMUSG00000052915.15"/>
</dbReference>
<dbReference type="GeneID" id="74026"/>
<dbReference type="KEGG" id="mmu:74026"/>
<dbReference type="UCSC" id="uc007lhi.2">
    <molecule id="Q6PDM1-4"/>
    <property type="organism name" value="mouse"/>
</dbReference>
<dbReference type="UCSC" id="uc007lhj.2">
    <molecule id="Q6PDM1-1"/>
    <property type="organism name" value="mouse"/>
</dbReference>
<dbReference type="UCSC" id="uc007lhk.2">
    <molecule id="Q6PDM1-2"/>
    <property type="organism name" value="mouse"/>
</dbReference>
<dbReference type="UCSC" id="uc007lhm.1">
    <molecule id="Q6PDM1-5"/>
    <property type="organism name" value="mouse"/>
</dbReference>
<dbReference type="UCSC" id="uc007lhn.2">
    <molecule id="Q6PDM1-3"/>
    <property type="organism name" value="mouse"/>
</dbReference>
<dbReference type="AGR" id="MGI:1921276"/>
<dbReference type="CTD" id="339287"/>
<dbReference type="MGI" id="MGI:1921276">
    <property type="gene designation" value="Msl1"/>
</dbReference>
<dbReference type="VEuPathDB" id="HostDB:ENSMUSG00000052915"/>
<dbReference type="eggNOG" id="ENOG502QQ0S">
    <property type="taxonomic scope" value="Eukaryota"/>
</dbReference>
<dbReference type="GeneTree" id="ENSGT00390000018292"/>
<dbReference type="HOGENOM" id="CLU_030878_1_0_1"/>
<dbReference type="InParanoid" id="Q6PDM1"/>
<dbReference type="OMA" id="HAQANCL"/>
<dbReference type="OrthoDB" id="6022555at2759"/>
<dbReference type="PhylomeDB" id="Q6PDM1"/>
<dbReference type="TreeFam" id="TF330735"/>
<dbReference type="Reactome" id="R-MMU-3214847">
    <property type="pathway name" value="HATs acetylate histones"/>
</dbReference>
<dbReference type="BioGRID-ORCS" id="74026">
    <property type="hits" value="14 hits in 77 CRISPR screens"/>
</dbReference>
<dbReference type="ChiTaRS" id="Msl1">
    <property type="organism name" value="mouse"/>
</dbReference>
<dbReference type="EvolutionaryTrace" id="Q6PDM1"/>
<dbReference type="PRO" id="PR:Q6PDM1"/>
<dbReference type="Proteomes" id="UP000000589">
    <property type="component" value="Chromosome 11"/>
</dbReference>
<dbReference type="RNAct" id="Q6PDM1">
    <property type="molecule type" value="protein"/>
</dbReference>
<dbReference type="Bgee" id="ENSMUSG00000052915">
    <property type="expression patterns" value="Expressed in granulocyte and 261 other cell types or tissues"/>
</dbReference>
<dbReference type="ExpressionAtlas" id="Q6PDM1">
    <property type="expression patterns" value="baseline and differential"/>
</dbReference>
<dbReference type="GO" id="GO:0072487">
    <property type="term" value="C:MSL complex"/>
    <property type="evidence" value="ECO:0000314"/>
    <property type="project" value="UniProtKB"/>
</dbReference>
<dbReference type="GO" id="GO:0016607">
    <property type="term" value="C:nuclear speck"/>
    <property type="evidence" value="ECO:0000314"/>
    <property type="project" value="UniProtKB"/>
</dbReference>
<dbReference type="GO" id="GO:0005654">
    <property type="term" value="C:nucleoplasm"/>
    <property type="evidence" value="ECO:0000314"/>
    <property type="project" value="UniProtKB"/>
</dbReference>
<dbReference type="GO" id="GO:0005634">
    <property type="term" value="C:nucleus"/>
    <property type="evidence" value="ECO:0000314"/>
    <property type="project" value="UniProtKB"/>
</dbReference>
<dbReference type="GO" id="GO:0030674">
    <property type="term" value="F:protein-macromolecule adaptor activity"/>
    <property type="evidence" value="ECO:0007669"/>
    <property type="project" value="Ensembl"/>
</dbReference>
<dbReference type="GO" id="GO:0006338">
    <property type="term" value="P:chromatin remodeling"/>
    <property type="evidence" value="ECO:0000314"/>
    <property type="project" value="UniProtKB"/>
</dbReference>
<dbReference type="GO" id="GO:0045893">
    <property type="term" value="P:positive regulation of DNA-templated transcription"/>
    <property type="evidence" value="ECO:0000315"/>
    <property type="project" value="ComplexPortal"/>
</dbReference>
<dbReference type="FunFam" id="1.20.5.170:FF:000047">
    <property type="entry name" value="male-specific lethal 1 homolog isoform X1"/>
    <property type="match status" value="1"/>
</dbReference>
<dbReference type="Gene3D" id="1.20.5.170">
    <property type="match status" value="1"/>
</dbReference>
<dbReference type="Gene3D" id="6.10.250.2000">
    <property type="match status" value="1"/>
</dbReference>
<dbReference type="InterPro" id="IPR026711">
    <property type="entry name" value="Msl-1"/>
</dbReference>
<dbReference type="InterPro" id="IPR031840">
    <property type="entry name" value="MSL1_dimer"/>
</dbReference>
<dbReference type="InterPro" id="IPR029332">
    <property type="entry name" value="PEHE_dom"/>
</dbReference>
<dbReference type="PANTHER" id="PTHR21656:SF2">
    <property type="entry name" value="MALE-SPECIFIC LETHAL 1 HOMOLOG"/>
    <property type="match status" value="1"/>
</dbReference>
<dbReference type="PANTHER" id="PTHR21656">
    <property type="entry name" value="MALE-SPECIFIC LETHAL-1 PROTEIN"/>
    <property type="match status" value="1"/>
</dbReference>
<dbReference type="Pfam" id="PF16801">
    <property type="entry name" value="MSL1_dimer"/>
    <property type="match status" value="1"/>
</dbReference>
<dbReference type="Pfam" id="PF15275">
    <property type="entry name" value="PEHE"/>
    <property type="match status" value="1"/>
</dbReference>
<dbReference type="SMART" id="SM01300">
    <property type="entry name" value="PEHE"/>
    <property type="match status" value="1"/>
</dbReference>
<dbReference type="PROSITE" id="PS52052">
    <property type="entry name" value="PEHE"/>
    <property type="match status" value="1"/>
</dbReference>